<name>SYDND_CHESB</name>
<keyword id="KW-0030">Aminoacyl-tRNA synthetase</keyword>
<keyword id="KW-0067">ATP-binding</keyword>
<keyword id="KW-0963">Cytoplasm</keyword>
<keyword id="KW-0436">Ligase</keyword>
<keyword id="KW-0547">Nucleotide-binding</keyword>
<keyword id="KW-0648">Protein biosynthesis</keyword>
<proteinExistence type="inferred from homology"/>
<sequence>MHRYRSHTCEELRPSDVGGTVRLSGWVHRVRDHGGLLFIDLRDHYGITQIVADPDSPSFSTAEKLRSEWVIRVDGEVKARTPETVNPNLATGGVEVFAREIEVLSQAKELPLPVFGEPDYPEDIRLKYRFLDLRRETLHRNILARTKIIAEMRKRMAESGFTEFSTPILTASSPEGARDFLVPSRLHQGKFYALPQAPQIYKQLIMVSGFDRYFQIAPCFRDEDPRADRLPGEFYQLDLEMSFVTQEDVFSTMEPVMRGIFEAFAEGKPVTQKLPRIPYDEAMRKYGSDKPDLRNPIVMEEVSEHFRGSGFKVFANILANDPKAEVWAIPAKTGGSRAFCDRMNSWAQGEGQPGLGYIFWRKEGDTLEGAGPIAKNIGPERTDAIRTQLGLGDGDACFFVAGDPKKFVAFAGAARTRAGEELNLVDRDRFELAWIVDFPFYEWNEDEKRIEFGHNPFSMPQGGMEALENQEPLSIKAFQYDLVCNGFEIASGGIRNHMPELMVKAFEVAGFDRQMVEERFGGLYRAFQYGAPPHGGMAAGIDRIVMLLRGAKNLREITMFPMNQQAMDLLMGAPSEATPQQLRELHIRLAPKQD</sequence>
<organism>
    <name type="scientific">Chelativorans sp. (strain BNC1)</name>
    <dbReference type="NCBI Taxonomy" id="266779"/>
    <lineage>
        <taxon>Bacteria</taxon>
        <taxon>Pseudomonadati</taxon>
        <taxon>Pseudomonadota</taxon>
        <taxon>Alphaproteobacteria</taxon>
        <taxon>Hyphomicrobiales</taxon>
        <taxon>Phyllobacteriaceae</taxon>
        <taxon>Chelativorans</taxon>
    </lineage>
</organism>
<protein>
    <recommendedName>
        <fullName evidence="1">Aspartate--tRNA(Asp/Asn) ligase</fullName>
        <ecNumber evidence="1">6.1.1.23</ecNumber>
    </recommendedName>
    <alternativeName>
        <fullName evidence="1">Aspartyl-tRNA synthetase</fullName>
        <shortName evidence="1">AspRS</shortName>
    </alternativeName>
    <alternativeName>
        <fullName evidence="1">Non-discriminating aspartyl-tRNA synthetase</fullName>
        <shortName evidence="1">ND-AspRS</shortName>
    </alternativeName>
</protein>
<reference key="1">
    <citation type="submission" date="2006-06" db="EMBL/GenBank/DDBJ databases">
        <title>Complete sequence of chromosome of Mesorhizobium sp. BNC1.</title>
        <authorList>
            <consortium name="US DOE Joint Genome Institute"/>
            <person name="Copeland A."/>
            <person name="Lucas S."/>
            <person name="Lapidus A."/>
            <person name="Barry K."/>
            <person name="Detter J.C."/>
            <person name="Glavina del Rio T."/>
            <person name="Hammon N."/>
            <person name="Israni S."/>
            <person name="Dalin E."/>
            <person name="Tice H."/>
            <person name="Pitluck S."/>
            <person name="Chertkov O."/>
            <person name="Brettin T."/>
            <person name="Bruce D."/>
            <person name="Han C."/>
            <person name="Tapia R."/>
            <person name="Gilna P."/>
            <person name="Schmutz J."/>
            <person name="Larimer F."/>
            <person name="Land M."/>
            <person name="Hauser L."/>
            <person name="Kyrpides N."/>
            <person name="Mikhailova N."/>
            <person name="Richardson P."/>
        </authorList>
    </citation>
    <scope>NUCLEOTIDE SEQUENCE [LARGE SCALE GENOMIC DNA]</scope>
    <source>
        <strain>BNC1</strain>
    </source>
</reference>
<gene>
    <name evidence="1" type="primary">aspS</name>
    <name type="ordered locus">Meso_1122</name>
</gene>
<comment type="function">
    <text evidence="1">Aspartyl-tRNA synthetase with relaxed tRNA specificity since it is able to aspartylate not only its cognate tRNA(Asp) but also tRNA(Asn). Reaction proceeds in two steps: L-aspartate is first activated by ATP to form Asp-AMP and then transferred to the acceptor end of tRNA(Asp/Asn).</text>
</comment>
<comment type="catalytic activity">
    <reaction evidence="1">
        <text>tRNA(Asx) + L-aspartate + ATP = L-aspartyl-tRNA(Asx) + AMP + diphosphate</text>
        <dbReference type="Rhea" id="RHEA:18349"/>
        <dbReference type="Rhea" id="RHEA-COMP:9710"/>
        <dbReference type="Rhea" id="RHEA-COMP:9711"/>
        <dbReference type="ChEBI" id="CHEBI:29991"/>
        <dbReference type="ChEBI" id="CHEBI:30616"/>
        <dbReference type="ChEBI" id="CHEBI:33019"/>
        <dbReference type="ChEBI" id="CHEBI:78442"/>
        <dbReference type="ChEBI" id="CHEBI:78516"/>
        <dbReference type="ChEBI" id="CHEBI:456215"/>
        <dbReference type="EC" id="6.1.1.23"/>
    </reaction>
</comment>
<comment type="subunit">
    <text evidence="1">Homodimer.</text>
</comment>
<comment type="subcellular location">
    <subcellularLocation>
        <location evidence="1">Cytoplasm</location>
    </subcellularLocation>
</comment>
<comment type="similarity">
    <text evidence="1">Belongs to the class-II aminoacyl-tRNA synthetase family. Type 1 subfamily.</text>
</comment>
<evidence type="ECO:0000255" key="1">
    <source>
        <dbReference type="HAMAP-Rule" id="MF_00044"/>
    </source>
</evidence>
<feature type="chain" id="PRO_1000006700" description="Aspartate--tRNA(Asp/Asn) ligase">
    <location>
        <begin position="1"/>
        <end position="594"/>
    </location>
</feature>
<feature type="region of interest" description="Aspartate" evidence="1">
    <location>
        <begin position="199"/>
        <end position="202"/>
    </location>
</feature>
<feature type="binding site" evidence="1">
    <location>
        <position position="175"/>
    </location>
    <ligand>
        <name>L-aspartate</name>
        <dbReference type="ChEBI" id="CHEBI:29991"/>
    </ligand>
</feature>
<feature type="binding site" evidence="1">
    <location>
        <begin position="221"/>
        <end position="223"/>
    </location>
    <ligand>
        <name>ATP</name>
        <dbReference type="ChEBI" id="CHEBI:30616"/>
    </ligand>
</feature>
<feature type="binding site" evidence="1">
    <location>
        <position position="221"/>
    </location>
    <ligand>
        <name>L-aspartate</name>
        <dbReference type="ChEBI" id="CHEBI:29991"/>
    </ligand>
</feature>
<feature type="binding site" evidence="1">
    <location>
        <position position="454"/>
    </location>
    <ligand>
        <name>L-aspartate</name>
        <dbReference type="ChEBI" id="CHEBI:29991"/>
    </ligand>
</feature>
<feature type="binding site" evidence="1">
    <location>
        <position position="488"/>
    </location>
    <ligand>
        <name>ATP</name>
        <dbReference type="ChEBI" id="CHEBI:30616"/>
    </ligand>
</feature>
<feature type="binding site" evidence="1">
    <location>
        <position position="495"/>
    </location>
    <ligand>
        <name>L-aspartate</name>
        <dbReference type="ChEBI" id="CHEBI:29991"/>
    </ligand>
</feature>
<feature type="binding site" evidence="1">
    <location>
        <begin position="540"/>
        <end position="543"/>
    </location>
    <ligand>
        <name>ATP</name>
        <dbReference type="ChEBI" id="CHEBI:30616"/>
    </ligand>
</feature>
<feature type="site" description="Important for tRNA non-discrimination" evidence="1">
    <location>
        <position position="33"/>
    </location>
</feature>
<dbReference type="EC" id="6.1.1.23" evidence="1"/>
<dbReference type="EMBL" id="CP000390">
    <property type="protein sequence ID" value="ABG62518.1"/>
    <property type="molecule type" value="Genomic_DNA"/>
</dbReference>
<dbReference type="SMR" id="Q11JA7"/>
<dbReference type="STRING" id="266779.Meso_1122"/>
<dbReference type="KEGG" id="mes:Meso_1122"/>
<dbReference type="eggNOG" id="COG0173">
    <property type="taxonomic scope" value="Bacteria"/>
</dbReference>
<dbReference type="HOGENOM" id="CLU_014330_3_2_5"/>
<dbReference type="OrthoDB" id="9802326at2"/>
<dbReference type="GO" id="GO:0005737">
    <property type="term" value="C:cytoplasm"/>
    <property type="evidence" value="ECO:0007669"/>
    <property type="project" value="UniProtKB-SubCell"/>
</dbReference>
<dbReference type="GO" id="GO:0004815">
    <property type="term" value="F:aspartate-tRNA ligase activity"/>
    <property type="evidence" value="ECO:0007669"/>
    <property type="project" value="UniProtKB-UniRule"/>
</dbReference>
<dbReference type="GO" id="GO:0050560">
    <property type="term" value="F:aspartate-tRNA(Asn) ligase activity"/>
    <property type="evidence" value="ECO:0007669"/>
    <property type="project" value="UniProtKB-EC"/>
</dbReference>
<dbReference type="GO" id="GO:0005524">
    <property type="term" value="F:ATP binding"/>
    <property type="evidence" value="ECO:0007669"/>
    <property type="project" value="UniProtKB-UniRule"/>
</dbReference>
<dbReference type="GO" id="GO:0003676">
    <property type="term" value="F:nucleic acid binding"/>
    <property type="evidence" value="ECO:0007669"/>
    <property type="project" value="InterPro"/>
</dbReference>
<dbReference type="GO" id="GO:0006422">
    <property type="term" value="P:aspartyl-tRNA aminoacylation"/>
    <property type="evidence" value="ECO:0007669"/>
    <property type="project" value="UniProtKB-UniRule"/>
</dbReference>
<dbReference type="CDD" id="cd00777">
    <property type="entry name" value="AspRS_core"/>
    <property type="match status" value="1"/>
</dbReference>
<dbReference type="CDD" id="cd04317">
    <property type="entry name" value="EcAspRS_like_N"/>
    <property type="match status" value="1"/>
</dbReference>
<dbReference type="Gene3D" id="3.30.930.10">
    <property type="entry name" value="Bira Bifunctional Protein, Domain 2"/>
    <property type="match status" value="1"/>
</dbReference>
<dbReference type="Gene3D" id="3.30.1360.30">
    <property type="entry name" value="GAD-like domain"/>
    <property type="match status" value="1"/>
</dbReference>
<dbReference type="Gene3D" id="2.40.50.140">
    <property type="entry name" value="Nucleic acid-binding proteins"/>
    <property type="match status" value="1"/>
</dbReference>
<dbReference type="HAMAP" id="MF_00044">
    <property type="entry name" value="Asp_tRNA_synth_type1"/>
    <property type="match status" value="1"/>
</dbReference>
<dbReference type="InterPro" id="IPR004364">
    <property type="entry name" value="Aa-tRNA-synt_II"/>
</dbReference>
<dbReference type="InterPro" id="IPR006195">
    <property type="entry name" value="aa-tRNA-synth_II"/>
</dbReference>
<dbReference type="InterPro" id="IPR045864">
    <property type="entry name" value="aa-tRNA-synth_II/BPL/LPL"/>
</dbReference>
<dbReference type="InterPro" id="IPR004524">
    <property type="entry name" value="Asp-tRNA-ligase_1"/>
</dbReference>
<dbReference type="InterPro" id="IPR047089">
    <property type="entry name" value="Asp-tRNA-ligase_1_N"/>
</dbReference>
<dbReference type="InterPro" id="IPR002312">
    <property type="entry name" value="Asp/Asn-tRNA-synth_IIb"/>
</dbReference>
<dbReference type="InterPro" id="IPR047090">
    <property type="entry name" value="AspRS_core"/>
</dbReference>
<dbReference type="InterPro" id="IPR004115">
    <property type="entry name" value="GAD-like_sf"/>
</dbReference>
<dbReference type="InterPro" id="IPR029351">
    <property type="entry name" value="GAD_dom"/>
</dbReference>
<dbReference type="InterPro" id="IPR012340">
    <property type="entry name" value="NA-bd_OB-fold"/>
</dbReference>
<dbReference type="InterPro" id="IPR004365">
    <property type="entry name" value="NA-bd_OB_tRNA"/>
</dbReference>
<dbReference type="NCBIfam" id="TIGR00459">
    <property type="entry name" value="aspS_bact"/>
    <property type="match status" value="1"/>
</dbReference>
<dbReference type="NCBIfam" id="NF001750">
    <property type="entry name" value="PRK00476.1"/>
    <property type="match status" value="1"/>
</dbReference>
<dbReference type="PANTHER" id="PTHR22594:SF5">
    <property type="entry name" value="ASPARTATE--TRNA LIGASE, MITOCHONDRIAL"/>
    <property type="match status" value="1"/>
</dbReference>
<dbReference type="PANTHER" id="PTHR22594">
    <property type="entry name" value="ASPARTYL/LYSYL-TRNA SYNTHETASE"/>
    <property type="match status" value="1"/>
</dbReference>
<dbReference type="Pfam" id="PF02938">
    <property type="entry name" value="GAD"/>
    <property type="match status" value="1"/>
</dbReference>
<dbReference type="Pfam" id="PF00152">
    <property type="entry name" value="tRNA-synt_2"/>
    <property type="match status" value="1"/>
</dbReference>
<dbReference type="Pfam" id="PF01336">
    <property type="entry name" value="tRNA_anti-codon"/>
    <property type="match status" value="1"/>
</dbReference>
<dbReference type="PRINTS" id="PR01042">
    <property type="entry name" value="TRNASYNTHASP"/>
</dbReference>
<dbReference type="SUPFAM" id="SSF55681">
    <property type="entry name" value="Class II aaRS and biotin synthetases"/>
    <property type="match status" value="1"/>
</dbReference>
<dbReference type="SUPFAM" id="SSF55261">
    <property type="entry name" value="GAD domain-like"/>
    <property type="match status" value="1"/>
</dbReference>
<dbReference type="SUPFAM" id="SSF50249">
    <property type="entry name" value="Nucleic acid-binding proteins"/>
    <property type="match status" value="1"/>
</dbReference>
<dbReference type="PROSITE" id="PS50862">
    <property type="entry name" value="AA_TRNA_LIGASE_II"/>
    <property type="match status" value="1"/>
</dbReference>
<accession>Q11JA7</accession>